<gene>
    <name type="primary">Pld6</name>
</gene>
<feature type="chain" id="PRO_0000325911" description="Mitochondrial cardiolipin hydrolase">
    <location>
        <begin position="1"/>
        <end position="221"/>
    </location>
</feature>
<feature type="topological domain" description="Mitochondrial intermembrane" evidence="2">
    <location>
        <begin position="1"/>
        <end position="4"/>
    </location>
</feature>
<feature type="transmembrane region" description="Helical" evidence="2">
    <location>
        <begin position="5"/>
        <end position="27"/>
    </location>
</feature>
<feature type="topological domain" description="Cytoplasmic" evidence="2">
    <location>
        <begin position="28"/>
        <end position="221"/>
    </location>
</feature>
<feature type="domain" description="PLD phosphodiesterase" evidence="3">
    <location>
        <begin position="148"/>
        <end position="175"/>
    </location>
</feature>
<feature type="zinc finger region" description="C3H1-type; atypical">
    <location>
        <begin position="44"/>
        <end position="75"/>
    </location>
</feature>
<feature type="region of interest" description="Required for mitochondrial localization">
    <location>
        <begin position="1"/>
        <end position="38"/>
    </location>
</feature>
<feature type="active site" evidence="3">
    <location>
        <position position="153"/>
    </location>
</feature>
<feature type="active site" evidence="3">
    <location>
        <position position="155"/>
    </location>
</feature>
<feature type="active site" evidence="3">
    <location>
        <position position="160"/>
    </location>
</feature>
<feature type="splice variant" id="VSP_032474" description="In isoform 2." evidence="12 13">
    <original>AGIQVRHDQ</original>
    <variation>GYRYGTTRT</variation>
    <location>
        <begin position="139"/>
        <end position="147"/>
    </location>
</feature>
<feature type="splice variant" id="VSP_032475" description="In isoform 2." evidence="12 13">
    <location>
        <begin position="148"/>
        <end position="221"/>
    </location>
</feature>
<feature type="mutagenesis site" description="Loss of nuclease activity." evidence="6">
    <original>H</original>
    <variation>N</variation>
    <location>
        <position position="153"/>
    </location>
</feature>
<feature type="strand" evidence="17">
    <location>
        <begin position="38"/>
        <end position="44"/>
    </location>
</feature>
<feature type="turn" evidence="17">
    <location>
        <begin position="51"/>
        <end position="55"/>
    </location>
</feature>
<feature type="strand" evidence="18">
    <location>
        <begin position="68"/>
        <end position="70"/>
    </location>
</feature>
<feature type="helix" evidence="17">
    <location>
        <begin position="76"/>
        <end position="85"/>
    </location>
</feature>
<feature type="strand" evidence="17">
    <location>
        <begin position="88"/>
        <end position="96"/>
    </location>
</feature>
<feature type="helix" evidence="17">
    <location>
        <begin position="101"/>
        <end position="112"/>
    </location>
</feature>
<feature type="strand" evidence="17">
    <location>
        <begin position="116"/>
        <end position="123"/>
    </location>
</feature>
<feature type="helix" evidence="17">
    <location>
        <begin position="132"/>
        <end position="138"/>
    </location>
</feature>
<feature type="strand" evidence="17">
    <location>
        <begin position="142"/>
        <end position="145"/>
    </location>
</feature>
<feature type="strand" evidence="17">
    <location>
        <begin position="148"/>
        <end position="150"/>
    </location>
</feature>
<feature type="strand" evidence="17">
    <location>
        <begin position="155"/>
        <end position="159"/>
    </location>
</feature>
<feature type="turn" evidence="17">
    <location>
        <begin position="160"/>
        <end position="162"/>
    </location>
</feature>
<feature type="strand" evidence="17">
    <location>
        <begin position="163"/>
        <end position="168"/>
    </location>
</feature>
<feature type="helix" evidence="17">
    <location>
        <begin position="173"/>
        <end position="178"/>
    </location>
</feature>
<feature type="strand" evidence="17">
    <location>
        <begin position="181"/>
        <end position="186"/>
    </location>
</feature>
<feature type="helix" evidence="17">
    <location>
        <begin position="189"/>
        <end position="205"/>
    </location>
</feature>
<name>PLD6_MOUSE</name>
<protein>
    <recommendedName>
        <fullName>Mitochondrial cardiolipin hydrolase</fullName>
        <ecNumber evidence="1">3.1.4.-</ecNumber>
    </recommendedName>
    <alternativeName>
        <fullName>Choline phosphatase 6</fullName>
    </alternativeName>
    <alternativeName>
        <fullName evidence="1">Mitochondrial phospholipase</fullName>
        <shortName evidence="1">MitoPLD</shortName>
    </alternativeName>
    <alternativeName>
        <fullName>Phosphatidylcholine-hydrolyzing phospholipase D6</fullName>
    </alternativeName>
    <alternativeName>
        <fullName>Phospholipase D6</fullName>
        <shortName evidence="15">PLD6</shortName>
    </alternativeName>
    <alternativeName>
        <fullName evidence="14">Protein zucchini homolog</fullName>
        <shortName>mZuc</shortName>
    </alternativeName>
</protein>
<sequence>MGRSSWRLVFAAGAGLALALEALPWLMRWLLAGRRPRREVLFFPSQVTCTEALLQAPGLPPGPSGCPCSLPHSESSLSRLLRALLAARSSLELCLFAFSSPQLGRAVQLLHQRGVRVRVITDCDYMALNGSQIGLLRKAGIQVRHDQDLGYMHHKFAIVDKKVLITGSLNWTTQAIQNNRENVLIMEDTEYVRLFLEEFERIWEEFDPTKYSFFPQKHRGH</sequence>
<keyword id="KW-0002">3D-structure</keyword>
<keyword id="KW-0025">Alternative splicing</keyword>
<keyword id="KW-1003">Cell membrane</keyword>
<keyword id="KW-0221">Differentiation</keyword>
<keyword id="KW-0255">Endonuclease</keyword>
<keyword id="KW-0333">Golgi apparatus</keyword>
<keyword id="KW-0378">Hydrolase</keyword>
<keyword id="KW-0442">Lipid degradation</keyword>
<keyword id="KW-0443">Lipid metabolism</keyword>
<keyword id="KW-0469">Meiosis</keyword>
<keyword id="KW-0472">Membrane</keyword>
<keyword id="KW-0479">Metal-binding</keyword>
<keyword id="KW-0496">Mitochondrion</keyword>
<keyword id="KW-1000">Mitochondrion outer membrane</keyword>
<keyword id="KW-0540">Nuclease</keyword>
<keyword id="KW-0539">Nucleus</keyword>
<keyword id="KW-1185">Reference proteome</keyword>
<keyword id="KW-0744">Spermatogenesis</keyword>
<keyword id="KW-0812">Transmembrane</keyword>
<keyword id="KW-1133">Transmembrane helix</keyword>
<keyword id="KW-0862">Zinc</keyword>
<keyword id="KW-0863">Zinc-finger</keyword>
<organism>
    <name type="scientific">Mus musculus</name>
    <name type="common">Mouse</name>
    <dbReference type="NCBI Taxonomy" id="10090"/>
    <lineage>
        <taxon>Eukaryota</taxon>
        <taxon>Metazoa</taxon>
        <taxon>Chordata</taxon>
        <taxon>Craniata</taxon>
        <taxon>Vertebrata</taxon>
        <taxon>Euteleostomi</taxon>
        <taxon>Mammalia</taxon>
        <taxon>Eutheria</taxon>
        <taxon>Euarchontoglires</taxon>
        <taxon>Glires</taxon>
        <taxon>Rodentia</taxon>
        <taxon>Myomorpha</taxon>
        <taxon>Muroidea</taxon>
        <taxon>Muridae</taxon>
        <taxon>Murinae</taxon>
        <taxon>Mus</taxon>
        <taxon>Mus</taxon>
    </lineage>
</organism>
<reference key="1">
    <citation type="journal article" date="2005" name="Science">
        <title>The transcriptional landscape of the mammalian genome.</title>
        <authorList>
            <person name="Carninci P."/>
            <person name="Kasukawa T."/>
            <person name="Katayama S."/>
            <person name="Gough J."/>
            <person name="Frith M.C."/>
            <person name="Maeda N."/>
            <person name="Oyama R."/>
            <person name="Ravasi T."/>
            <person name="Lenhard B."/>
            <person name="Wells C."/>
            <person name="Kodzius R."/>
            <person name="Shimokawa K."/>
            <person name="Bajic V.B."/>
            <person name="Brenner S.E."/>
            <person name="Batalov S."/>
            <person name="Forrest A.R."/>
            <person name="Zavolan M."/>
            <person name="Davis M.J."/>
            <person name="Wilming L.G."/>
            <person name="Aidinis V."/>
            <person name="Allen J.E."/>
            <person name="Ambesi-Impiombato A."/>
            <person name="Apweiler R."/>
            <person name="Aturaliya R.N."/>
            <person name="Bailey T.L."/>
            <person name="Bansal M."/>
            <person name="Baxter L."/>
            <person name="Beisel K.W."/>
            <person name="Bersano T."/>
            <person name="Bono H."/>
            <person name="Chalk A.M."/>
            <person name="Chiu K.P."/>
            <person name="Choudhary V."/>
            <person name="Christoffels A."/>
            <person name="Clutterbuck D.R."/>
            <person name="Crowe M.L."/>
            <person name="Dalla E."/>
            <person name="Dalrymple B.P."/>
            <person name="de Bono B."/>
            <person name="Della Gatta G."/>
            <person name="di Bernardo D."/>
            <person name="Down T."/>
            <person name="Engstrom P."/>
            <person name="Fagiolini M."/>
            <person name="Faulkner G."/>
            <person name="Fletcher C.F."/>
            <person name="Fukushima T."/>
            <person name="Furuno M."/>
            <person name="Futaki S."/>
            <person name="Gariboldi M."/>
            <person name="Georgii-Hemming P."/>
            <person name="Gingeras T.R."/>
            <person name="Gojobori T."/>
            <person name="Green R.E."/>
            <person name="Gustincich S."/>
            <person name="Harbers M."/>
            <person name="Hayashi Y."/>
            <person name="Hensch T.K."/>
            <person name="Hirokawa N."/>
            <person name="Hill D."/>
            <person name="Huminiecki L."/>
            <person name="Iacono M."/>
            <person name="Ikeo K."/>
            <person name="Iwama A."/>
            <person name="Ishikawa T."/>
            <person name="Jakt M."/>
            <person name="Kanapin A."/>
            <person name="Katoh M."/>
            <person name="Kawasawa Y."/>
            <person name="Kelso J."/>
            <person name="Kitamura H."/>
            <person name="Kitano H."/>
            <person name="Kollias G."/>
            <person name="Krishnan S.P."/>
            <person name="Kruger A."/>
            <person name="Kummerfeld S.K."/>
            <person name="Kurochkin I.V."/>
            <person name="Lareau L.F."/>
            <person name="Lazarevic D."/>
            <person name="Lipovich L."/>
            <person name="Liu J."/>
            <person name="Liuni S."/>
            <person name="McWilliam S."/>
            <person name="Madan Babu M."/>
            <person name="Madera M."/>
            <person name="Marchionni L."/>
            <person name="Matsuda H."/>
            <person name="Matsuzawa S."/>
            <person name="Miki H."/>
            <person name="Mignone F."/>
            <person name="Miyake S."/>
            <person name="Morris K."/>
            <person name="Mottagui-Tabar S."/>
            <person name="Mulder N."/>
            <person name="Nakano N."/>
            <person name="Nakauchi H."/>
            <person name="Ng P."/>
            <person name="Nilsson R."/>
            <person name="Nishiguchi S."/>
            <person name="Nishikawa S."/>
            <person name="Nori F."/>
            <person name="Ohara O."/>
            <person name="Okazaki Y."/>
            <person name="Orlando V."/>
            <person name="Pang K.C."/>
            <person name="Pavan W.J."/>
            <person name="Pavesi G."/>
            <person name="Pesole G."/>
            <person name="Petrovsky N."/>
            <person name="Piazza S."/>
            <person name="Reed J."/>
            <person name="Reid J.F."/>
            <person name="Ring B.Z."/>
            <person name="Ringwald M."/>
            <person name="Rost B."/>
            <person name="Ruan Y."/>
            <person name="Salzberg S.L."/>
            <person name="Sandelin A."/>
            <person name="Schneider C."/>
            <person name="Schoenbach C."/>
            <person name="Sekiguchi K."/>
            <person name="Semple C.A."/>
            <person name="Seno S."/>
            <person name="Sessa L."/>
            <person name="Sheng Y."/>
            <person name="Shibata Y."/>
            <person name="Shimada H."/>
            <person name="Shimada K."/>
            <person name="Silva D."/>
            <person name="Sinclair B."/>
            <person name="Sperling S."/>
            <person name="Stupka E."/>
            <person name="Sugiura K."/>
            <person name="Sultana R."/>
            <person name="Takenaka Y."/>
            <person name="Taki K."/>
            <person name="Tammoja K."/>
            <person name="Tan S.L."/>
            <person name="Tang S."/>
            <person name="Taylor M.S."/>
            <person name="Tegner J."/>
            <person name="Teichmann S.A."/>
            <person name="Ueda H.R."/>
            <person name="van Nimwegen E."/>
            <person name="Verardo R."/>
            <person name="Wei C.L."/>
            <person name="Yagi K."/>
            <person name="Yamanishi H."/>
            <person name="Zabarovsky E."/>
            <person name="Zhu S."/>
            <person name="Zimmer A."/>
            <person name="Hide W."/>
            <person name="Bult C."/>
            <person name="Grimmond S.M."/>
            <person name="Teasdale R.D."/>
            <person name="Liu E.T."/>
            <person name="Brusic V."/>
            <person name="Quackenbush J."/>
            <person name="Wahlestedt C."/>
            <person name="Mattick J.S."/>
            <person name="Hume D.A."/>
            <person name="Kai C."/>
            <person name="Sasaki D."/>
            <person name="Tomaru Y."/>
            <person name="Fukuda S."/>
            <person name="Kanamori-Katayama M."/>
            <person name="Suzuki M."/>
            <person name="Aoki J."/>
            <person name="Arakawa T."/>
            <person name="Iida J."/>
            <person name="Imamura K."/>
            <person name="Itoh M."/>
            <person name="Kato T."/>
            <person name="Kawaji H."/>
            <person name="Kawagashira N."/>
            <person name="Kawashima T."/>
            <person name="Kojima M."/>
            <person name="Kondo S."/>
            <person name="Konno H."/>
            <person name="Nakano K."/>
            <person name="Ninomiya N."/>
            <person name="Nishio T."/>
            <person name="Okada M."/>
            <person name="Plessy C."/>
            <person name="Shibata K."/>
            <person name="Shiraki T."/>
            <person name="Suzuki S."/>
            <person name="Tagami M."/>
            <person name="Waki K."/>
            <person name="Watahiki A."/>
            <person name="Okamura-Oho Y."/>
            <person name="Suzuki H."/>
            <person name="Kawai J."/>
            <person name="Hayashizaki Y."/>
        </authorList>
    </citation>
    <scope>NUCLEOTIDE SEQUENCE [LARGE SCALE MRNA] (ISOFORM 2)</scope>
    <source>
        <strain>C57BL/6J</strain>
        <tissue>Egg</tissue>
        <tissue>Testis</tissue>
    </source>
</reference>
<reference key="2">
    <citation type="journal article" date="2009" name="PLoS Biol.">
        <title>Lineage-specific biology revealed by a finished genome assembly of the mouse.</title>
        <authorList>
            <person name="Church D.M."/>
            <person name="Goodstadt L."/>
            <person name="Hillier L.W."/>
            <person name="Zody M.C."/>
            <person name="Goldstein S."/>
            <person name="She X."/>
            <person name="Bult C.J."/>
            <person name="Agarwala R."/>
            <person name="Cherry J.L."/>
            <person name="DiCuccio M."/>
            <person name="Hlavina W."/>
            <person name="Kapustin Y."/>
            <person name="Meric P."/>
            <person name="Maglott D."/>
            <person name="Birtle Z."/>
            <person name="Marques A.C."/>
            <person name="Graves T."/>
            <person name="Zhou S."/>
            <person name="Teague B."/>
            <person name="Potamousis K."/>
            <person name="Churas C."/>
            <person name="Place M."/>
            <person name="Herschleb J."/>
            <person name="Runnheim R."/>
            <person name="Forrest D."/>
            <person name="Amos-Landgraf J."/>
            <person name="Schwartz D.C."/>
            <person name="Cheng Z."/>
            <person name="Lindblad-Toh K."/>
            <person name="Eichler E.E."/>
            <person name="Ponting C.P."/>
        </authorList>
    </citation>
    <scope>NUCLEOTIDE SEQUENCE [LARGE SCALE GENOMIC DNA]</scope>
    <source>
        <strain>C57BL/6J</strain>
    </source>
</reference>
<reference key="3">
    <citation type="journal article" date="2004" name="Genome Res.">
        <title>The status, quality, and expansion of the NIH full-length cDNA project: the Mammalian Gene Collection (MGC).</title>
        <authorList>
            <consortium name="The MGC Project Team"/>
        </authorList>
    </citation>
    <scope>NUCLEOTIDE SEQUENCE [LARGE SCALE MRNA] (ISOFORM 2)</scope>
    <scope>NUCLEOTIDE SEQUENCE [LARGE SCALE MRNA] OF 1-195 (ISOFORM 1)</scope>
    <source>
        <tissue>Brain</tissue>
    </source>
</reference>
<reference key="4">
    <citation type="journal article" date="2010" name="Cell">
        <title>A tissue-specific atlas of mouse protein phosphorylation and expression.</title>
        <authorList>
            <person name="Huttlin E.L."/>
            <person name="Jedrychowski M.P."/>
            <person name="Elias J.E."/>
            <person name="Goswami T."/>
            <person name="Rad R."/>
            <person name="Beausoleil S.A."/>
            <person name="Villen J."/>
            <person name="Haas W."/>
            <person name="Sowa M.E."/>
            <person name="Gygi S.P."/>
        </authorList>
    </citation>
    <scope>IDENTIFICATION BY MASS SPECTROMETRY [LARGE SCALE ANALYSIS]</scope>
    <source>
        <tissue>Testis</tissue>
    </source>
</reference>
<reference key="5">
    <citation type="journal article" date="2011" name="Dev. Cell">
        <title>MITOPLD is a mitochondrial protein essential for nuage formation and piRNA biogenesis in the mouse germline.</title>
        <authorList>
            <person name="Watanabe T."/>
            <person name="Chuma S."/>
            <person name="Yamamoto Y."/>
            <person name="Kuramochi-Miyagawa S."/>
            <person name="Totoki Y."/>
            <person name="Toyoda A."/>
            <person name="Hoki Y."/>
            <person name="Fujiyama A."/>
            <person name="Shibata T."/>
            <person name="Sado T."/>
            <person name="Noce T."/>
            <person name="Nakano T."/>
            <person name="Nakatsuji N."/>
            <person name="Lin H."/>
            <person name="Sasaki H."/>
        </authorList>
    </citation>
    <scope>FUNCTION</scope>
    <scope>DISRUPTION PHENOTYPE</scope>
    <scope>SUBCELLULAR LOCATION</scope>
    <scope>TOPOLOGY</scope>
    <scope>TISSUE SPECIFICITY</scope>
    <scope>DEVELOPMENTAL STAGE</scope>
</reference>
<reference key="6">
    <citation type="journal article" date="2011" name="Dev. Cell">
        <title>piRNA-associated germline nuage formation and spermatogenesis require MitoPLD profusogenic mitochondrial-surface lipid signaling.</title>
        <authorList>
            <person name="Huang H."/>
            <person name="Gao Q."/>
            <person name="Peng X."/>
            <person name="Choi S.Y."/>
            <person name="Sarma K."/>
            <person name="Ren H."/>
            <person name="Morris A.J."/>
            <person name="Frohman M.A."/>
        </authorList>
    </citation>
    <scope>FUNCTION</scope>
    <scope>DEVELOPMENTAL STAGE</scope>
    <scope>DISRUPTION PHENOTYPE</scope>
</reference>
<reference key="7">
    <citation type="journal article" date="2012" name="Nature">
        <title>Structure and function of Zucchini endoribonuclease in piRNA biogenesis.</title>
        <authorList>
            <person name="Nishimasu H."/>
            <person name="Ishizu H."/>
            <person name="Saito K."/>
            <person name="Fukuhara S."/>
            <person name="Kamatani M.K."/>
            <person name="Bonnefond L."/>
            <person name="Matsumoto N."/>
            <person name="Nishizawa T."/>
            <person name="Nakanaga K."/>
            <person name="Aoki J."/>
            <person name="Ishitani R."/>
            <person name="Siomi H."/>
            <person name="Siomi M.C."/>
            <person name="Nureki O."/>
        </authorList>
    </citation>
    <scope>FUNCTION</scope>
</reference>
<reference key="8">
    <citation type="journal article" date="2015" name="Genes Dev.">
        <title>The RNA helicase MOV10L1 binds piRNA precursors to initiate piRNA processing.</title>
        <authorList>
            <person name="Vourekas A."/>
            <person name="Zheng K."/>
            <person name="Fu Q."/>
            <person name="Maragkakis M."/>
            <person name="Alexiou P."/>
            <person name="Ma J."/>
            <person name="Pillai R.S."/>
            <person name="Mourelatos Z."/>
            <person name="Wang P.J."/>
        </authorList>
    </citation>
    <scope>FUNCTION</scope>
    <scope>INTERACTION WITH MOV10L1</scope>
</reference>
<reference key="9">
    <citation type="journal article" date="2015" name="Cancer Cell">
        <title>A MYC-Driven Change in Mitochondrial Dynamics Limits YAP/TAZ Function in Mammary Epithelial Cells and Breast Cancer.</title>
        <authorList>
            <person name="von Eyss B."/>
            <person name="Jaenicke L.A."/>
            <person name="Kortlever R.M."/>
            <person name="Royla N."/>
            <person name="Wiese K.E."/>
            <person name="Letschert S."/>
            <person name="McDuffus L.A."/>
            <person name="Sauer M."/>
            <person name="Rosenwald A."/>
            <person name="Evan G.I."/>
            <person name="Kempa S."/>
            <person name="Eilers M."/>
        </authorList>
    </citation>
    <scope>FUNCTION</scope>
</reference>
<reference key="10">
    <citation type="journal article" date="2017" name="Cell Discov.">
        <title>Glycerol kinase-like proteins cooperate with Pld6 in regulating sperm mitochondrial sheath formation and male fertility.</title>
        <authorList>
            <person name="Chen Y."/>
            <person name="Liang P."/>
            <person name="Huang Y."/>
            <person name="Li M."/>
            <person name="Zhang X."/>
            <person name="Ding C."/>
            <person name="Feng J."/>
            <person name="Zhang Z."/>
            <person name="Zhang X."/>
            <person name="Gao Y."/>
            <person name="Zhang Q."/>
            <person name="Cao S."/>
            <person name="Zheng H."/>
            <person name="Liu D."/>
            <person name="Songyang Z."/>
            <person name="Huang J."/>
        </authorList>
    </citation>
    <scope>INTERACTION WITH GK2</scope>
</reference>
<reference key="11">
    <citation type="journal article" date="2021" name="Cell Tissue Res.">
        <title>Cellular and subcellular localization of endogenous phospholipase D6 in seminiferous tubules of mouse testes.</title>
        <authorList>
            <person name="Riew T.R."/>
            <person name="Kim S."/>
            <person name="Jin X."/>
            <person name="Kim H.L."/>
            <person name="Hwang W.C."/>
            <person name="Kang M."/>
            <person name="Yang E.S."/>
            <person name="Lee M.Y."/>
            <person name="Min D.S."/>
        </authorList>
    </citation>
    <scope>FUNCTION</scope>
    <scope>SUBCELLULAR LOCATION</scope>
</reference>
<reference key="12">
    <citation type="journal article" date="2012" name="Nature">
        <title>The structural biochemistry of Zucchini implicates it as a nuclease in piRNA biogenesis.</title>
        <authorList>
            <person name="Ipsaro J.J."/>
            <person name="Haase A.D."/>
            <person name="Knott S.R."/>
            <person name="Joshua-Tor L."/>
            <person name="Hannon G.J."/>
        </authorList>
    </citation>
    <scope>X-RAY CRYSTALLOGRAPHY (1.75 ANGSTROMS) OF 31-221</scope>
    <scope>FUNCTION</scope>
    <scope>HOMODIMERIZATION</scope>
    <scope>ACTIVITY REGULATION</scope>
    <scope>MUTAGENESIS OF HIS-153</scope>
</reference>
<proteinExistence type="evidence at protein level"/>
<accession>Q5SWZ9</accession>
<accession>B7ZN71</accession>
<accession>Q3UTA3</accession>
<accession>Q8BVM0</accession>
<evidence type="ECO:0000250" key="1">
    <source>
        <dbReference type="UniProtKB" id="Q8N2A8"/>
    </source>
</evidence>
<evidence type="ECO:0000255" key="2"/>
<evidence type="ECO:0000255" key="3">
    <source>
        <dbReference type="PROSITE-ProRule" id="PRU00153"/>
    </source>
</evidence>
<evidence type="ECO:0000269" key="4">
    <source>
    </source>
</evidence>
<evidence type="ECO:0000269" key="5">
    <source>
    </source>
</evidence>
<evidence type="ECO:0000269" key="6">
    <source>
    </source>
</evidence>
<evidence type="ECO:0000269" key="7">
    <source>
    </source>
</evidence>
<evidence type="ECO:0000269" key="8">
    <source>
    </source>
</evidence>
<evidence type="ECO:0000269" key="9">
    <source>
    </source>
</evidence>
<evidence type="ECO:0000269" key="10">
    <source>
    </source>
</evidence>
<evidence type="ECO:0000269" key="11">
    <source>
    </source>
</evidence>
<evidence type="ECO:0000303" key="12">
    <source>
    </source>
</evidence>
<evidence type="ECO:0000303" key="13">
    <source>
    </source>
</evidence>
<evidence type="ECO:0000303" key="14">
    <source>
    </source>
</evidence>
<evidence type="ECO:0000303" key="15">
    <source>
    </source>
</evidence>
<evidence type="ECO:0000305" key="16"/>
<evidence type="ECO:0007829" key="17">
    <source>
        <dbReference type="PDB" id="4GGJ"/>
    </source>
</evidence>
<evidence type="ECO:0007829" key="18">
    <source>
        <dbReference type="PDB" id="4GGK"/>
    </source>
</evidence>
<dbReference type="EC" id="3.1.4.-" evidence="1"/>
<dbReference type="EMBL" id="AK077214">
    <property type="protein sequence ID" value="BAC36687.1"/>
    <property type="molecule type" value="mRNA"/>
</dbReference>
<dbReference type="EMBL" id="AK139586">
    <property type="protein sequence ID" value="BAE24077.1"/>
    <property type="molecule type" value="mRNA"/>
</dbReference>
<dbReference type="EMBL" id="AL596204">
    <property type="status" value="NOT_ANNOTATED_CDS"/>
    <property type="molecule type" value="Genomic_DNA"/>
</dbReference>
<dbReference type="EMBL" id="BC119245">
    <property type="protein sequence ID" value="AAI19246.1"/>
    <property type="molecule type" value="mRNA"/>
</dbReference>
<dbReference type="EMBL" id="BC145052">
    <property type="protein sequence ID" value="AAI45053.1"/>
    <property type="molecule type" value="mRNA"/>
</dbReference>
<dbReference type="CCDS" id="CCDS70199.1">
    <molecule id="Q5SWZ9-1"/>
</dbReference>
<dbReference type="RefSeq" id="NP_001277212.1">
    <molecule id="Q5SWZ9-1"/>
    <property type="nucleotide sequence ID" value="NM_001290283.1"/>
</dbReference>
<dbReference type="RefSeq" id="NP_898962.2">
    <molecule id="Q5SWZ9-2"/>
    <property type="nucleotide sequence ID" value="NM_183139.2"/>
</dbReference>
<dbReference type="PDB" id="4GGJ">
    <property type="method" value="X-ray"/>
    <property type="resolution" value="1.75 A"/>
    <property type="chains" value="A=31-221"/>
</dbReference>
<dbReference type="PDB" id="4GGK">
    <property type="method" value="X-ray"/>
    <property type="resolution" value="2.10 A"/>
    <property type="chains" value="A=31-221"/>
</dbReference>
<dbReference type="PDBsum" id="4GGJ"/>
<dbReference type="PDBsum" id="4GGK"/>
<dbReference type="SMR" id="Q5SWZ9"/>
<dbReference type="BioGRID" id="228810">
    <property type="interactions" value="1"/>
</dbReference>
<dbReference type="DIP" id="DIP-59982N"/>
<dbReference type="FunCoup" id="Q5SWZ9">
    <property type="interactions" value="345"/>
</dbReference>
<dbReference type="STRING" id="10090.ENSMUSP00000115503"/>
<dbReference type="PhosphoSitePlus" id="Q5SWZ9"/>
<dbReference type="SwissPalm" id="Q5SWZ9"/>
<dbReference type="PaxDb" id="10090-ENSMUSP00000115503"/>
<dbReference type="ProteomicsDB" id="289759">
    <molecule id="Q5SWZ9-1"/>
</dbReference>
<dbReference type="ProteomicsDB" id="289760">
    <molecule id="Q5SWZ9-2"/>
</dbReference>
<dbReference type="Antibodypedia" id="63312">
    <property type="antibodies" value="87 antibodies from 21 providers"/>
</dbReference>
<dbReference type="Ensembl" id="ENSMUST00000125307.2">
    <molecule id="Q5SWZ9-1"/>
    <property type="protein sequence ID" value="ENSMUSP00000115503.2"/>
    <property type="gene ID" value="ENSMUSG00000043648.8"/>
</dbReference>
<dbReference type="GeneID" id="194908"/>
<dbReference type="KEGG" id="mmu:194908"/>
<dbReference type="UCSC" id="uc007jev.1">
    <molecule id="Q5SWZ9-2"/>
    <property type="organism name" value="mouse"/>
</dbReference>
<dbReference type="UCSC" id="uc011xvp.1">
    <molecule id="Q5SWZ9-1"/>
    <property type="organism name" value="mouse"/>
</dbReference>
<dbReference type="AGR" id="MGI:2687283"/>
<dbReference type="CTD" id="201164"/>
<dbReference type="MGI" id="MGI:2687283">
    <property type="gene designation" value="Pld6"/>
</dbReference>
<dbReference type="VEuPathDB" id="HostDB:ENSMUSG00000043648"/>
<dbReference type="eggNOG" id="ENOG502RXG9">
    <property type="taxonomic scope" value="Eukaryota"/>
</dbReference>
<dbReference type="GeneTree" id="ENSGT00390000004368"/>
<dbReference type="HOGENOM" id="CLU_080814_0_1_1"/>
<dbReference type="InParanoid" id="Q5SWZ9"/>
<dbReference type="OMA" id="RIWEEFD"/>
<dbReference type="OrthoDB" id="5205528at2759"/>
<dbReference type="PhylomeDB" id="Q5SWZ9"/>
<dbReference type="TreeFam" id="TF332817"/>
<dbReference type="Reactome" id="R-MMU-1483166">
    <property type="pathway name" value="Synthesis of PA"/>
</dbReference>
<dbReference type="BioGRID-ORCS" id="194908">
    <property type="hits" value="2 hits in 75 CRISPR screens"/>
</dbReference>
<dbReference type="EvolutionaryTrace" id="Q5SWZ9"/>
<dbReference type="PRO" id="PR:Q5SWZ9"/>
<dbReference type="Proteomes" id="UP000000589">
    <property type="component" value="Chromosome 11"/>
</dbReference>
<dbReference type="RNAct" id="Q5SWZ9">
    <property type="molecule type" value="protein"/>
</dbReference>
<dbReference type="Bgee" id="ENSMUSG00000043648">
    <property type="expression patterns" value="Expressed in spermatocyte and 65 other cell types or tissues"/>
</dbReference>
<dbReference type="GO" id="GO:0005789">
    <property type="term" value="C:endoplasmic reticulum membrane"/>
    <property type="evidence" value="ECO:0000304"/>
    <property type="project" value="Reactome"/>
</dbReference>
<dbReference type="GO" id="GO:0005794">
    <property type="term" value="C:Golgi apparatus"/>
    <property type="evidence" value="ECO:0007669"/>
    <property type="project" value="UniProtKB-SubCell"/>
</dbReference>
<dbReference type="GO" id="GO:0005741">
    <property type="term" value="C:mitochondrial outer membrane"/>
    <property type="evidence" value="ECO:0000314"/>
    <property type="project" value="UniProtKB"/>
</dbReference>
<dbReference type="GO" id="GO:0031965">
    <property type="term" value="C:nuclear membrane"/>
    <property type="evidence" value="ECO:0007669"/>
    <property type="project" value="UniProtKB-SubCell"/>
</dbReference>
<dbReference type="GO" id="GO:0005886">
    <property type="term" value="C:plasma membrane"/>
    <property type="evidence" value="ECO:0007669"/>
    <property type="project" value="UniProtKB-SubCell"/>
</dbReference>
<dbReference type="GO" id="GO:0035755">
    <property type="term" value="F:cardiolipin hydrolase activity"/>
    <property type="evidence" value="ECO:0000250"/>
    <property type="project" value="UniProtKB"/>
</dbReference>
<dbReference type="GO" id="GO:0004519">
    <property type="term" value="F:endonuclease activity"/>
    <property type="evidence" value="ECO:0007669"/>
    <property type="project" value="UniProtKB-KW"/>
</dbReference>
<dbReference type="GO" id="GO:0042802">
    <property type="term" value="F:identical protein binding"/>
    <property type="evidence" value="ECO:0000353"/>
    <property type="project" value="IntAct"/>
</dbReference>
<dbReference type="GO" id="GO:0004630">
    <property type="term" value="F:phospholipase D activity"/>
    <property type="evidence" value="ECO:0000304"/>
    <property type="project" value="Reactome"/>
</dbReference>
<dbReference type="GO" id="GO:0042803">
    <property type="term" value="F:protein homodimerization activity"/>
    <property type="evidence" value="ECO:0000250"/>
    <property type="project" value="UniProtKB"/>
</dbReference>
<dbReference type="GO" id="GO:0008270">
    <property type="term" value="F:zinc ion binding"/>
    <property type="evidence" value="ECO:0007669"/>
    <property type="project" value="UniProtKB-KW"/>
</dbReference>
<dbReference type="GO" id="GO:0016042">
    <property type="term" value="P:lipid catabolic process"/>
    <property type="evidence" value="ECO:0007669"/>
    <property type="project" value="UniProtKB-KW"/>
</dbReference>
<dbReference type="GO" id="GO:0051321">
    <property type="term" value="P:meiotic cell cycle"/>
    <property type="evidence" value="ECO:0000315"/>
    <property type="project" value="UniProtKB"/>
</dbReference>
<dbReference type="GO" id="GO:0008053">
    <property type="term" value="P:mitochondrial fusion"/>
    <property type="evidence" value="ECO:0000250"/>
    <property type="project" value="UniProtKB"/>
</dbReference>
<dbReference type="GO" id="GO:0030719">
    <property type="term" value="P:P granule organization"/>
    <property type="evidence" value="ECO:0000315"/>
    <property type="project" value="UniProtKB"/>
</dbReference>
<dbReference type="GO" id="GO:0034587">
    <property type="term" value="P:piRNA processing"/>
    <property type="evidence" value="ECO:0000315"/>
    <property type="project" value="UniProtKB"/>
</dbReference>
<dbReference type="GO" id="GO:0010636">
    <property type="term" value="P:positive regulation of mitochondrial fusion"/>
    <property type="evidence" value="ECO:0000266"/>
    <property type="project" value="MGI"/>
</dbReference>
<dbReference type="GO" id="GO:0007286">
    <property type="term" value="P:spermatid development"/>
    <property type="evidence" value="ECO:0000315"/>
    <property type="project" value="UniProtKB"/>
</dbReference>
<dbReference type="CDD" id="cd09171">
    <property type="entry name" value="PLDc_vPLD6_like"/>
    <property type="match status" value="1"/>
</dbReference>
<dbReference type="FunFam" id="3.30.870.10:FF:000030">
    <property type="entry name" value="mitochondrial cardiolipin hydrolase"/>
    <property type="match status" value="1"/>
</dbReference>
<dbReference type="Gene3D" id="3.30.870.10">
    <property type="entry name" value="Endonuclease Chain A"/>
    <property type="match status" value="1"/>
</dbReference>
<dbReference type="InterPro" id="IPR025202">
    <property type="entry name" value="PLD-like_dom"/>
</dbReference>
<dbReference type="InterPro" id="IPR051406">
    <property type="entry name" value="PLD_domain"/>
</dbReference>
<dbReference type="InterPro" id="IPR001736">
    <property type="entry name" value="PLipase_D/transphosphatidylase"/>
</dbReference>
<dbReference type="PANTHER" id="PTHR43856">
    <property type="entry name" value="CARDIOLIPIN HYDROLASE"/>
    <property type="match status" value="1"/>
</dbReference>
<dbReference type="PANTHER" id="PTHR43856:SF1">
    <property type="entry name" value="MITOCHONDRIAL CARDIOLIPIN HYDROLASE"/>
    <property type="match status" value="1"/>
</dbReference>
<dbReference type="Pfam" id="PF13091">
    <property type="entry name" value="PLDc_2"/>
    <property type="match status" value="1"/>
</dbReference>
<dbReference type="SMART" id="SM00155">
    <property type="entry name" value="PLDc"/>
    <property type="match status" value="1"/>
</dbReference>
<dbReference type="SUPFAM" id="SSF56024">
    <property type="entry name" value="Phospholipase D/nuclease"/>
    <property type="match status" value="1"/>
</dbReference>
<dbReference type="PROSITE" id="PS50035">
    <property type="entry name" value="PLD"/>
    <property type="match status" value="1"/>
</dbReference>
<comment type="function">
    <text evidence="1 4 5 6 7 8 9 11">Presents phospholipase and nuclease activities, depending on the different physiological conditions. Interaction with Mitoguardin (MIGA1 or MIGA2) affects the dimer conformation, facilitating the lipase activity over the nuclease activity. Plays a key role in mitochondrial fusion and fission via its phospholipase activity. In its phospholipase role, it uses the mitochondrial lipid cardiolipin as substrate to generate phosphatidate (PA or 1,2-diacyl-sn-glycero-3-phosphate), a second messenger signaling lipid. Production of PA facilitates Mitofusin-mediated fusion, whereas the cleavage of PA by the Lipin family of phosphatases produces diacylgycerol (DAG) which promotes mitochondrial fission. Both Lipin and DAG regulate mitochondrial dynamics and membrane fusion/fission, important processes for adapting mitochondrial metabolism to changes in cell physiology. Mitochondrial fusion enables cells to cope with the increased nucleotide demand during DNA synthesis (By similarity). Mitochondrial function and dynamics are closely associated with biological processes such as cell growth, proliferation, and differentiation (PubMed:21397848). Mediator of MYC activity, promotes mitochondrial fusion and activates AMPK which in turn inhibits YAP/TAZ, thereby inducing cell growth and proliferation (PubMed:26678338). The endonuclease activity plays a critical role in PIWI-interacting RNA (piRNA) biogenesis during spermatogenesis (PubMed:21397847, PubMed:21397848). Implicated in spermatogenesis and sperm fertility in testicular germ cells, its single strand-specific nuclease activity is critical for the biogenesis/maturation of PIWI-interacting RNA (piRNA) (PubMed:21397847, PubMed:23064227, PubMed:23064230). MOV10L1 selectively binds to piRNA precursors and funnels them to the endonuclease that catalyzes the first cleavage step of piRNA processing to generate piRNA intermediate fragments that are subsequently loaded to Piwi proteins (PubMed:25762440). Cleaves either DNA or RNA substrates with similar affinity, producing a 5' phosphate end, in this way it participates in the processing of primary piRNA transcripts. piRNAs provide essential protection against the activity of mobile genetic elements. piRNA-mediated transposon silencing is thus critical for maintaining genome stability, in particular in germline cells when transposons are mobilized as a consequence of wide-spread genomic demethylation (PubMed:23064227, PubMed:23064230). PA may act as signaling molecule in the recognition/transport of the precursor RNAs of primary piRNAs (PubMed:21397847). Interacts with tesmin in testes, suggesting a role in spermatogenesis via association with its interacting partner (PubMed:33783608).</text>
</comment>
<comment type="catalytic activity">
    <reaction evidence="1">
        <text>a cardiolipin + H2O = a 1,2-diacyl-sn-glycero-3-phospho-(1'-sn-glycerol) + a 1,2-diacyl-sn-glycero-3-phosphate + H(+)</text>
        <dbReference type="Rhea" id="RHEA:44884"/>
        <dbReference type="ChEBI" id="CHEBI:15377"/>
        <dbReference type="ChEBI" id="CHEBI:15378"/>
        <dbReference type="ChEBI" id="CHEBI:58608"/>
        <dbReference type="ChEBI" id="CHEBI:62237"/>
        <dbReference type="ChEBI" id="CHEBI:64716"/>
    </reaction>
    <physiologicalReaction direction="left-to-right" evidence="1">
        <dbReference type="Rhea" id="RHEA:44885"/>
    </physiologicalReaction>
</comment>
<comment type="activity regulation">
    <text evidence="1 6">Single stranded DNA (ssDNA) hydrolase activity does not depend upon, but is stimulated by the presence of Ca(2+) and Mn(2+) (PubMed:23064227). MIGA1 and MIGA2 increase PLD6 self-association affinity and affects the homodimer conformation facilitating its phospholipase activity over the nuclease activity. MYC induces its expression and stimulates its phospholipase activity (By similarity).</text>
</comment>
<comment type="subunit">
    <text evidence="1 6 8 10 11">Homodimer (PubMed:23064227). Interacts with MOV10L1 (PubMed:25762440). Interacts with MIGA1 and MIGA2; possibly facilitating homodimer formation (By similarity). Interacts with GK2 (PubMed:28852571).</text>
</comment>
<comment type="interaction">
    <interactant intactId="EBI-16017309">
        <id>Q5SWZ9-1</id>
    </interactant>
    <interactant intactId="EBI-16017309">
        <id>Q5SWZ9-1</id>
        <label>Pld6</label>
    </interactant>
    <organismsDiffer>false</organismsDiffer>
    <experiments>3</experiments>
</comment>
<comment type="subcellular location">
    <subcellularLocation>
        <location evidence="4">Mitochondrion outer membrane</location>
        <topology evidence="4">Single-pass membrane protein</topology>
    </subcellularLocation>
    <subcellularLocation>
        <location evidence="4">Nucleus membrane</location>
    </subcellularLocation>
    <subcellularLocation>
        <location evidence="4">Cell membrane</location>
    </subcellularLocation>
    <subcellularLocation>
        <location evidence="11">Golgi apparatus</location>
    </subcellularLocation>
    <text evidence="16">Localization in the mitochondrial outer membrane is found in different cell types where phospholipase was the predominant activity, however, in pachytene spermatocytes and spermatids of mouse testes where nuclease activity is predominant, localization is restricted to the Golgi, suggesting this enzyme is localized in different subcellular compartments depending on the role (phospholipase or nuclease) it needs to play in each cell type and developmental stage.</text>
</comment>
<comment type="alternative products">
    <event type="alternative splicing"/>
    <isoform>
        <id>Q5SWZ9-1</id>
        <name>1</name>
        <sequence type="displayed"/>
    </isoform>
    <isoform>
        <id>Q5SWZ9-2</id>
        <name>2</name>
        <sequence type="described" ref="VSP_032474 VSP_032475"/>
    </isoform>
</comment>
<comment type="tissue specificity">
    <text evidence="4 11">Predominantly expressed in testis (at protein level) and in growing ovary (PubMed:21397847, PubMed:33783608). Also expressed in the brain, eye and urinary bladder (at protein level), but its levels were low or undetectable in other organs (PubMed:33783608).</text>
</comment>
<comment type="developmental stage">
    <text evidence="4 5">Expressed in embryonic testis at 16.5 dpc (at protein level). Expressed at low levels in type A and B spermatogonia, increases 5-fold in spermatocytes undergoing meiosis (pachytene spermatocytes), and then decreases again in round spermatids. Expressed at low levels in testes in young mice, peaks from postnatal day 14 to day 29 with the onset of puberty andpersists in adulthood (at protein level).</text>
</comment>
<comment type="domain">
    <text evidence="1">In contrast to other members of the phospholipase D family, contains only one PLD phosphodiesterase domain, suggesting that it has a single half-catalytic and requires homodimerization to form a complete active site.</text>
</comment>
<comment type="disruption phenotype">
    <text evidence="4 5">Males are sterile, because of meiotic arrest during spermatogenesis due to demethylation and subsequent derepression of transposable elements. No spermatids were observed in the mutant testes, and no spermatozoon in the epididymis. Effects are caused by defects in primary piRNA biogenesis: in contrast to wild-type cells neither mitochondria nor associated meiotic nuage (named P granule) are aggregated.</text>
</comment>
<comment type="similarity">
    <text evidence="16">Belongs to the phospholipase D family. MitoPLD/Zucchini subfamily.</text>
</comment>
<comment type="caution">
    <text evidence="11">Evidence for subcellular location in the Golgi was determined in pachytene spermatocytes and spermatids in mouse testes. They observe that the ectopically expressed PLD6 protein was localized to the mitochondria in PLD6-transfected cells. Authors claim a possible explanation for the contradictory results is that previous studies have reported the localization of exogenous PLD6, but not endogenous PLD6, in cultured cells. The reason for differences observed in subcellular localization of exogenous and endogenous PLD6 is not clear but one attributable reason may be that different types of anti-PLD6 antibodies have been used in previous studies.</text>
</comment>